<accession>A8A249</accession>
<comment type="subcellular location">
    <subcellularLocation>
        <location evidence="1">Cytoplasm</location>
        <location evidence="1">Nucleoid</location>
    </subcellularLocation>
</comment>
<comment type="similarity">
    <text evidence="1">Belongs to the YejK family.</text>
</comment>
<dbReference type="EMBL" id="CP000802">
    <property type="protein sequence ID" value="ABV06603.1"/>
    <property type="molecule type" value="Genomic_DNA"/>
</dbReference>
<dbReference type="RefSeq" id="WP_000050793.1">
    <property type="nucleotide sequence ID" value="NC_009800.1"/>
</dbReference>
<dbReference type="SMR" id="A8A249"/>
<dbReference type="KEGG" id="ecx:EcHS_A2324"/>
<dbReference type="HOGENOM" id="CLU_063050_0_1_6"/>
<dbReference type="GO" id="GO:0043590">
    <property type="term" value="C:bacterial nucleoid"/>
    <property type="evidence" value="ECO:0007669"/>
    <property type="project" value="TreeGrafter"/>
</dbReference>
<dbReference type="GO" id="GO:0005737">
    <property type="term" value="C:cytoplasm"/>
    <property type="evidence" value="ECO:0007669"/>
    <property type="project" value="UniProtKB-UniRule"/>
</dbReference>
<dbReference type="GO" id="GO:0003690">
    <property type="term" value="F:double-stranded DNA binding"/>
    <property type="evidence" value="ECO:0007669"/>
    <property type="project" value="TreeGrafter"/>
</dbReference>
<dbReference type="GO" id="GO:0003727">
    <property type="term" value="F:single-stranded RNA binding"/>
    <property type="evidence" value="ECO:0007669"/>
    <property type="project" value="TreeGrafter"/>
</dbReference>
<dbReference type="HAMAP" id="MF_00730">
    <property type="entry name" value="NdpA"/>
    <property type="match status" value="1"/>
</dbReference>
<dbReference type="InterPro" id="IPR007358">
    <property type="entry name" value="Nucleoid_associated_NdpA"/>
</dbReference>
<dbReference type="NCBIfam" id="NF001557">
    <property type="entry name" value="PRK00378.1"/>
    <property type="match status" value="1"/>
</dbReference>
<dbReference type="PANTHER" id="PTHR38772">
    <property type="match status" value="1"/>
</dbReference>
<dbReference type="PANTHER" id="PTHR38772:SF1">
    <property type="entry name" value="NUCLEOID-ASSOCIATED PROTEIN YEJK"/>
    <property type="match status" value="1"/>
</dbReference>
<dbReference type="Pfam" id="PF04245">
    <property type="entry name" value="NA37"/>
    <property type="match status" value="1"/>
</dbReference>
<sequence length="335" mass="37823">MSLDINQIALHQLIKRDEQNLELVLRDSLLEPTETVVEMVAELHRVYSAKNKAYGLFSEESELAQTLRLQRQGEEDFLAFSRAATGRLRDELAKYPFADGGFVLFCHYRYLAVEYLLVAVLSNLSSMRVNENLDINPTHYLDINHADIVARIDLTEWETNPESTRYLTFLKGRVGRKVADFFMDFLGASEGLNAKAQNRGLLQAVDDFTAEAQLDKAERQNVRQQVYSYCNEQLQAGEEIELKSLSKELAGVSEVSFTEFAAEKGYELEESFPADRSTLRQLTKFAGSGGGLTINFDAMLLGERIFWDPATDTLTIKGTPPNLRDQLQRRTSGGN</sequence>
<name>NDPA_ECOHS</name>
<organism>
    <name type="scientific">Escherichia coli O9:H4 (strain HS)</name>
    <dbReference type="NCBI Taxonomy" id="331112"/>
    <lineage>
        <taxon>Bacteria</taxon>
        <taxon>Pseudomonadati</taxon>
        <taxon>Pseudomonadota</taxon>
        <taxon>Gammaproteobacteria</taxon>
        <taxon>Enterobacterales</taxon>
        <taxon>Enterobacteriaceae</taxon>
        <taxon>Escherichia</taxon>
    </lineage>
</organism>
<gene>
    <name evidence="1" type="primary">yejK</name>
    <name type="ordered locus">EcHS_A2324</name>
</gene>
<feature type="chain" id="PRO_1000062108" description="Nucleoid-associated protein YejK">
    <location>
        <begin position="1"/>
        <end position="335"/>
    </location>
</feature>
<protein>
    <recommendedName>
        <fullName evidence="1">Nucleoid-associated protein YejK</fullName>
    </recommendedName>
</protein>
<keyword id="KW-0963">Cytoplasm</keyword>
<evidence type="ECO:0000255" key="1">
    <source>
        <dbReference type="HAMAP-Rule" id="MF_00730"/>
    </source>
</evidence>
<proteinExistence type="inferred from homology"/>
<reference key="1">
    <citation type="journal article" date="2008" name="J. Bacteriol.">
        <title>The pangenome structure of Escherichia coli: comparative genomic analysis of E. coli commensal and pathogenic isolates.</title>
        <authorList>
            <person name="Rasko D.A."/>
            <person name="Rosovitz M.J."/>
            <person name="Myers G.S.A."/>
            <person name="Mongodin E.F."/>
            <person name="Fricke W.F."/>
            <person name="Gajer P."/>
            <person name="Crabtree J."/>
            <person name="Sebaihia M."/>
            <person name="Thomson N.R."/>
            <person name="Chaudhuri R."/>
            <person name="Henderson I.R."/>
            <person name="Sperandio V."/>
            <person name="Ravel J."/>
        </authorList>
    </citation>
    <scope>NUCLEOTIDE SEQUENCE [LARGE SCALE GENOMIC DNA]</scope>
    <source>
        <strain>HS</strain>
    </source>
</reference>